<sequence length="206" mass="21580">MTNILIVTSSPRGPEGLSTRFATEIAEGLKTALGGTLSRRDLAANPPPHIAQAYIGGRVVGPETRTPEQAKAVGLAQELVDEVTAADVIVLGSGMINFGPSSQLKAWFDHITWPGVTFGYSAAGKPQGLLTGKKVYLVTASGGVFSEGDWAAFDFQTGYLRHLLSFIGLTDIQIIRVEGTVFGPEAAKAAIAATEAQVRAVLEKAA</sequence>
<keyword id="KW-0285">Flavoprotein</keyword>
<keyword id="KW-0288">FMN</keyword>
<keyword id="KW-0520">NAD</keyword>
<keyword id="KW-0560">Oxidoreductase</keyword>
<keyword id="KW-0614">Plasmid</keyword>
<keyword id="KW-1185">Reference proteome</keyword>
<proteinExistence type="inferred from homology"/>
<reference key="1">
    <citation type="journal article" date="2006" name="Proc. Natl. Acad. Sci. U.S.A.">
        <title>The partitioned Rhizobium etli genome: genetic and metabolic redundancy in seven interacting replicons.</title>
        <authorList>
            <person name="Gonzalez V."/>
            <person name="Santamaria R.I."/>
            <person name="Bustos P."/>
            <person name="Hernandez-Gonzalez I."/>
            <person name="Medrano-Soto A."/>
            <person name="Moreno-Hagelsieb G."/>
            <person name="Janga S.C."/>
            <person name="Ramirez M.A."/>
            <person name="Jimenez-Jacinto V."/>
            <person name="Collado-Vides J."/>
            <person name="Davila G."/>
        </authorList>
    </citation>
    <scope>NUCLEOTIDE SEQUENCE [LARGE SCALE GENOMIC DNA]</scope>
    <source>
        <strain>ATCC 51251 / DSM 11541 / JCM 21823 / NBRC 15573 / CFN 42</strain>
    </source>
</reference>
<name>AZOR2_RHIEC</name>
<accession>Q2K196</accession>
<feature type="chain" id="PRO_0000245961" description="FMN-dependent NADH:quinone oxidoreductase 2">
    <location>
        <begin position="1"/>
        <end position="206"/>
    </location>
</feature>
<feature type="binding site" evidence="1">
    <location>
        <position position="10"/>
    </location>
    <ligand>
        <name>FMN</name>
        <dbReference type="ChEBI" id="CHEBI:58210"/>
    </ligand>
</feature>
<comment type="function">
    <text evidence="1">Quinone reductase that provides resistance to thiol-specific stress caused by electrophilic quinones.</text>
</comment>
<comment type="function">
    <text evidence="1">Also exhibits azoreductase activity. Catalyzes the reductive cleavage of the azo bond in aromatic azo compounds to the corresponding amines.</text>
</comment>
<comment type="catalytic activity">
    <reaction evidence="1">
        <text>2 a quinone + NADH + H(+) = 2 a 1,4-benzosemiquinone + NAD(+)</text>
        <dbReference type="Rhea" id="RHEA:65952"/>
        <dbReference type="ChEBI" id="CHEBI:15378"/>
        <dbReference type="ChEBI" id="CHEBI:57540"/>
        <dbReference type="ChEBI" id="CHEBI:57945"/>
        <dbReference type="ChEBI" id="CHEBI:132124"/>
        <dbReference type="ChEBI" id="CHEBI:134225"/>
    </reaction>
</comment>
<comment type="catalytic activity">
    <reaction evidence="1">
        <text>N,N-dimethyl-1,4-phenylenediamine + anthranilate + 2 NAD(+) = 2-(4-dimethylaminophenyl)diazenylbenzoate + 2 NADH + 2 H(+)</text>
        <dbReference type="Rhea" id="RHEA:55872"/>
        <dbReference type="ChEBI" id="CHEBI:15378"/>
        <dbReference type="ChEBI" id="CHEBI:15783"/>
        <dbReference type="ChEBI" id="CHEBI:16567"/>
        <dbReference type="ChEBI" id="CHEBI:57540"/>
        <dbReference type="ChEBI" id="CHEBI:57945"/>
        <dbReference type="ChEBI" id="CHEBI:71579"/>
        <dbReference type="EC" id="1.7.1.17"/>
    </reaction>
</comment>
<comment type="cofactor">
    <cofactor evidence="1">
        <name>FMN</name>
        <dbReference type="ChEBI" id="CHEBI:58210"/>
    </cofactor>
    <text evidence="1">Binds 1 FMN per subunit.</text>
</comment>
<comment type="subunit">
    <text evidence="1">Homodimer.</text>
</comment>
<comment type="similarity">
    <text evidence="1">Belongs to the azoreductase type 1 family.</text>
</comment>
<organism>
    <name type="scientific">Rhizobium etli (strain ATCC 51251 / DSM 11541 / JCM 21823 / NBRC 15573 / CFN 42)</name>
    <dbReference type="NCBI Taxonomy" id="347834"/>
    <lineage>
        <taxon>Bacteria</taxon>
        <taxon>Pseudomonadati</taxon>
        <taxon>Pseudomonadota</taxon>
        <taxon>Alphaproteobacteria</taxon>
        <taxon>Hyphomicrobiales</taxon>
        <taxon>Rhizobiaceae</taxon>
        <taxon>Rhizobium/Agrobacterium group</taxon>
        <taxon>Rhizobium</taxon>
    </lineage>
</organism>
<protein>
    <recommendedName>
        <fullName evidence="1">FMN-dependent NADH:quinone oxidoreductase 2</fullName>
        <ecNumber evidence="1">1.6.5.-</ecNumber>
    </recommendedName>
    <alternativeName>
        <fullName evidence="1">Azo-dye reductase 2</fullName>
    </alternativeName>
    <alternativeName>
        <fullName evidence="1">FMN-dependent NADH-azo compound oxidoreductase 2</fullName>
    </alternativeName>
    <alternativeName>
        <fullName evidence="1">FMN-dependent NADH-azoreductase 2</fullName>
        <ecNumber evidence="1">1.7.1.17</ecNumber>
    </alternativeName>
</protein>
<gene>
    <name evidence="1" type="primary">azoR2</name>
    <name type="ordered locus">RHE_PC00047</name>
</gene>
<evidence type="ECO:0000255" key="1">
    <source>
        <dbReference type="HAMAP-Rule" id="MF_01216"/>
    </source>
</evidence>
<dbReference type="EC" id="1.6.5.-" evidence="1"/>
<dbReference type="EC" id="1.7.1.17" evidence="1"/>
<dbReference type="EMBL" id="CP000136">
    <property type="protein sequence ID" value="ABC93254.1"/>
    <property type="molecule type" value="Genomic_DNA"/>
</dbReference>
<dbReference type="RefSeq" id="WP_011427674.1">
    <property type="nucleotide sequence ID" value="NC_007764.1"/>
</dbReference>
<dbReference type="SMR" id="Q2K196"/>
<dbReference type="KEGG" id="ret:RHE_PC00047"/>
<dbReference type="eggNOG" id="COG1182">
    <property type="taxonomic scope" value="Bacteria"/>
</dbReference>
<dbReference type="HOGENOM" id="CLU_088964_0_0_5"/>
<dbReference type="OrthoDB" id="9787136at2"/>
<dbReference type="Proteomes" id="UP000001936">
    <property type="component" value="Plasmid p42c"/>
</dbReference>
<dbReference type="GO" id="GO:0009055">
    <property type="term" value="F:electron transfer activity"/>
    <property type="evidence" value="ECO:0007669"/>
    <property type="project" value="UniProtKB-UniRule"/>
</dbReference>
<dbReference type="GO" id="GO:0010181">
    <property type="term" value="F:FMN binding"/>
    <property type="evidence" value="ECO:0007669"/>
    <property type="project" value="UniProtKB-UniRule"/>
</dbReference>
<dbReference type="GO" id="GO:0016652">
    <property type="term" value="F:oxidoreductase activity, acting on NAD(P)H as acceptor"/>
    <property type="evidence" value="ECO:0007669"/>
    <property type="project" value="UniProtKB-UniRule"/>
</dbReference>
<dbReference type="GO" id="GO:0016655">
    <property type="term" value="F:oxidoreductase activity, acting on NAD(P)H, quinone or similar compound as acceptor"/>
    <property type="evidence" value="ECO:0007669"/>
    <property type="project" value="InterPro"/>
</dbReference>
<dbReference type="Gene3D" id="3.40.50.360">
    <property type="match status" value="1"/>
</dbReference>
<dbReference type="HAMAP" id="MF_01216">
    <property type="entry name" value="Azoreductase_type1"/>
    <property type="match status" value="1"/>
</dbReference>
<dbReference type="InterPro" id="IPR003680">
    <property type="entry name" value="Flavodoxin_fold"/>
</dbReference>
<dbReference type="InterPro" id="IPR029039">
    <property type="entry name" value="Flavoprotein-like_sf"/>
</dbReference>
<dbReference type="InterPro" id="IPR050104">
    <property type="entry name" value="FMN-dep_NADH:Q_OxRdtase_AzoR1"/>
</dbReference>
<dbReference type="InterPro" id="IPR023048">
    <property type="entry name" value="NADH:quinone_OxRdtase_FMN_depd"/>
</dbReference>
<dbReference type="PANTHER" id="PTHR43741">
    <property type="entry name" value="FMN-DEPENDENT NADH-AZOREDUCTASE 1"/>
    <property type="match status" value="1"/>
</dbReference>
<dbReference type="PANTHER" id="PTHR43741:SF2">
    <property type="entry name" value="FMN-DEPENDENT NADH:QUINONE OXIDOREDUCTASE"/>
    <property type="match status" value="1"/>
</dbReference>
<dbReference type="Pfam" id="PF02525">
    <property type="entry name" value="Flavodoxin_2"/>
    <property type="match status" value="1"/>
</dbReference>
<dbReference type="SUPFAM" id="SSF52218">
    <property type="entry name" value="Flavoproteins"/>
    <property type="match status" value="1"/>
</dbReference>
<geneLocation type="plasmid">
    <name>p42c</name>
</geneLocation>